<dbReference type="EMBL" id="DQ008589">
    <property type="protein sequence ID" value="AAY56400.1"/>
    <property type="molecule type" value="mRNA"/>
</dbReference>
<dbReference type="RefSeq" id="NP_001306311.1">
    <property type="nucleotide sequence ID" value="NM_001319382.1"/>
</dbReference>
<dbReference type="RefSeq" id="XP_005546953.2">
    <property type="nucleotide sequence ID" value="XM_005546896.4"/>
</dbReference>
<dbReference type="SMR" id="Q2Y2P0"/>
<dbReference type="Ensembl" id="ENSMFAT00000091704.1">
    <property type="protein sequence ID" value="ENSMFAP00000051990.1"/>
    <property type="gene ID" value="ENSMFAG00000051272.1"/>
</dbReference>
<dbReference type="Ensembl" id="ENSMFAT00000094321.1">
    <property type="protein sequence ID" value="ENSMFAP00000055480.1"/>
    <property type="gene ID" value="ENSMFAG00000051272.1"/>
</dbReference>
<dbReference type="GeneID" id="102137577"/>
<dbReference type="KEGG" id="mcf:102137577"/>
<dbReference type="CTD" id="1230"/>
<dbReference type="eggNOG" id="KOG3656">
    <property type="taxonomic scope" value="Eukaryota"/>
</dbReference>
<dbReference type="GeneTree" id="ENSGT01020000230359"/>
<dbReference type="Proteomes" id="UP000233100">
    <property type="component" value="Chromosome 2"/>
</dbReference>
<dbReference type="GO" id="GO:0005737">
    <property type="term" value="C:cytoplasm"/>
    <property type="evidence" value="ECO:0007669"/>
    <property type="project" value="TreeGrafter"/>
</dbReference>
<dbReference type="GO" id="GO:0009897">
    <property type="term" value="C:external side of plasma membrane"/>
    <property type="evidence" value="ECO:0007669"/>
    <property type="project" value="Ensembl"/>
</dbReference>
<dbReference type="GO" id="GO:0005886">
    <property type="term" value="C:plasma membrane"/>
    <property type="evidence" value="ECO:0000250"/>
    <property type="project" value="UniProtKB"/>
</dbReference>
<dbReference type="GO" id="GO:0016493">
    <property type="term" value="F:C-C chemokine receptor activity"/>
    <property type="evidence" value="ECO:0007669"/>
    <property type="project" value="Ensembl"/>
</dbReference>
<dbReference type="GO" id="GO:0071791">
    <property type="term" value="F:chemokine (C-C motif) ligand 5 binding"/>
    <property type="evidence" value="ECO:0007669"/>
    <property type="project" value="Ensembl"/>
</dbReference>
<dbReference type="GO" id="GO:0035717">
    <property type="term" value="F:chemokine (C-C motif) ligand 7 binding"/>
    <property type="evidence" value="ECO:0007669"/>
    <property type="project" value="Ensembl"/>
</dbReference>
<dbReference type="GO" id="GO:0004435">
    <property type="term" value="F:phosphatidylinositol-4,5-bisphosphate phospholipase C activity"/>
    <property type="evidence" value="ECO:0007669"/>
    <property type="project" value="Ensembl"/>
</dbReference>
<dbReference type="GO" id="GO:0006816">
    <property type="term" value="P:calcium ion transport"/>
    <property type="evidence" value="ECO:0007669"/>
    <property type="project" value="Ensembl"/>
</dbReference>
<dbReference type="GO" id="GO:0019722">
    <property type="term" value="P:calcium-mediated signaling"/>
    <property type="evidence" value="ECO:0007669"/>
    <property type="project" value="TreeGrafter"/>
</dbReference>
<dbReference type="GO" id="GO:0007267">
    <property type="term" value="P:cell-cell signaling"/>
    <property type="evidence" value="ECO:0007669"/>
    <property type="project" value="Ensembl"/>
</dbReference>
<dbReference type="GO" id="GO:0006887">
    <property type="term" value="P:exocytosis"/>
    <property type="evidence" value="ECO:0007669"/>
    <property type="project" value="Ensembl"/>
</dbReference>
<dbReference type="GO" id="GO:0006955">
    <property type="term" value="P:immune response"/>
    <property type="evidence" value="ECO:0007669"/>
    <property type="project" value="Ensembl"/>
</dbReference>
<dbReference type="GO" id="GO:0006954">
    <property type="term" value="P:inflammatory response"/>
    <property type="evidence" value="ECO:0007669"/>
    <property type="project" value="InterPro"/>
</dbReference>
<dbReference type="GO" id="GO:0006874">
    <property type="term" value="P:intracellular calcium ion homeostasis"/>
    <property type="evidence" value="ECO:0007669"/>
    <property type="project" value="Ensembl"/>
</dbReference>
<dbReference type="GO" id="GO:0002548">
    <property type="term" value="P:monocyte chemotaxis"/>
    <property type="evidence" value="ECO:0007669"/>
    <property type="project" value="Ensembl"/>
</dbReference>
<dbReference type="GO" id="GO:0030502">
    <property type="term" value="P:negative regulation of bone mineralization"/>
    <property type="evidence" value="ECO:0007669"/>
    <property type="project" value="Ensembl"/>
</dbReference>
<dbReference type="GO" id="GO:0010629">
    <property type="term" value="P:negative regulation of gene expression"/>
    <property type="evidence" value="ECO:0007669"/>
    <property type="project" value="Ensembl"/>
</dbReference>
<dbReference type="GO" id="GO:0051928">
    <property type="term" value="P:positive regulation of calcium ion transport"/>
    <property type="evidence" value="ECO:0007669"/>
    <property type="project" value="Ensembl"/>
</dbReference>
<dbReference type="GO" id="GO:0007204">
    <property type="term" value="P:positive regulation of cytosolic calcium ion concentration"/>
    <property type="evidence" value="ECO:0007669"/>
    <property type="project" value="Ensembl"/>
</dbReference>
<dbReference type="GO" id="GO:0070374">
    <property type="term" value="P:positive regulation of ERK1 and ERK2 cascade"/>
    <property type="evidence" value="ECO:0007669"/>
    <property type="project" value="Ensembl"/>
</dbReference>
<dbReference type="GO" id="GO:0090026">
    <property type="term" value="P:positive regulation of monocyte chemotaxis"/>
    <property type="evidence" value="ECO:0000250"/>
    <property type="project" value="UniProtKB"/>
</dbReference>
<dbReference type="GO" id="GO:0045672">
    <property type="term" value="P:positive regulation of osteoclast differentiation"/>
    <property type="evidence" value="ECO:0007669"/>
    <property type="project" value="Ensembl"/>
</dbReference>
<dbReference type="FunFam" id="1.20.1070.10:FF:000026">
    <property type="entry name" value="C-C chemokine receptor type 5"/>
    <property type="match status" value="1"/>
</dbReference>
<dbReference type="Gene3D" id="1.20.1070.10">
    <property type="entry name" value="Rhodopsin 7-helix transmembrane proteins"/>
    <property type="match status" value="1"/>
</dbReference>
<dbReference type="InterPro" id="IPR050119">
    <property type="entry name" value="CCR1-9-like"/>
</dbReference>
<dbReference type="InterPro" id="IPR002236">
    <property type="entry name" value="Chemokine_CCR1"/>
</dbReference>
<dbReference type="InterPro" id="IPR000355">
    <property type="entry name" value="Chemokine_rcpt"/>
</dbReference>
<dbReference type="InterPro" id="IPR000276">
    <property type="entry name" value="GPCR_Rhodpsn"/>
</dbReference>
<dbReference type="InterPro" id="IPR017452">
    <property type="entry name" value="GPCR_Rhodpsn_7TM"/>
</dbReference>
<dbReference type="PANTHER" id="PTHR10489:SF711">
    <property type="entry name" value="C-C CHEMOKINE RECEPTOR TYPE 1"/>
    <property type="match status" value="1"/>
</dbReference>
<dbReference type="PANTHER" id="PTHR10489">
    <property type="entry name" value="CELL ADHESION MOLECULE"/>
    <property type="match status" value="1"/>
</dbReference>
<dbReference type="Pfam" id="PF00001">
    <property type="entry name" value="7tm_1"/>
    <property type="match status" value="1"/>
</dbReference>
<dbReference type="PRINTS" id="PR00657">
    <property type="entry name" value="CCCHEMOKINER"/>
</dbReference>
<dbReference type="PRINTS" id="PR01106">
    <property type="entry name" value="CHEMOKINER1"/>
</dbReference>
<dbReference type="PRINTS" id="PR00237">
    <property type="entry name" value="GPCRRHODOPSN"/>
</dbReference>
<dbReference type="SMART" id="SM01381">
    <property type="entry name" value="7TM_GPCR_Srsx"/>
    <property type="match status" value="1"/>
</dbReference>
<dbReference type="SUPFAM" id="SSF81321">
    <property type="entry name" value="Family A G protein-coupled receptor-like"/>
    <property type="match status" value="1"/>
</dbReference>
<dbReference type="PROSITE" id="PS00237">
    <property type="entry name" value="G_PROTEIN_RECEP_F1_1"/>
    <property type="match status" value="1"/>
</dbReference>
<dbReference type="PROSITE" id="PS50262">
    <property type="entry name" value="G_PROTEIN_RECEP_F1_2"/>
    <property type="match status" value="1"/>
</dbReference>
<organism>
    <name type="scientific">Macaca fascicularis</name>
    <name type="common">Crab-eating macaque</name>
    <name type="synonym">Cynomolgus monkey</name>
    <dbReference type="NCBI Taxonomy" id="9541"/>
    <lineage>
        <taxon>Eukaryota</taxon>
        <taxon>Metazoa</taxon>
        <taxon>Chordata</taxon>
        <taxon>Craniata</taxon>
        <taxon>Vertebrata</taxon>
        <taxon>Euteleostomi</taxon>
        <taxon>Mammalia</taxon>
        <taxon>Eutheria</taxon>
        <taxon>Euarchontoglires</taxon>
        <taxon>Primates</taxon>
        <taxon>Haplorrhini</taxon>
        <taxon>Catarrhini</taxon>
        <taxon>Cercopithecidae</taxon>
        <taxon>Cercopithecinae</taxon>
        <taxon>Macaca</taxon>
    </lineage>
</organism>
<evidence type="ECO:0000250" key="1">
    <source>
        <dbReference type="UniProtKB" id="P32246"/>
    </source>
</evidence>
<evidence type="ECO:0000250" key="2">
    <source>
        <dbReference type="UniProtKB" id="P51675"/>
    </source>
</evidence>
<evidence type="ECO:0000255" key="3"/>
<evidence type="ECO:0000255" key="4">
    <source>
        <dbReference type="PROSITE-ProRule" id="PRU00521"/>
    </source>
</evidence>
<reference key="1">
    <citation type="journal article" date="2005" name="J. Leukoc. Biol.">
        <title>Cloning, expression, and functional characterization of cynomolgus monkey (Macaca fascicularis) CC chemokine receptor 1.</title>
        <authorList>
            <person name="Gupta S."/>
            <person name="Schulz-Maronde S."/>
            <person name="Kutzleb C."/>
            <person name="Richter R."/>
            <person name="Forssmann W.-G."/>
            <person name="Kapp A."/>
            <person name="Forssmann U."/>
            <person name="Elsner J."/>
        </authorList>
    </citation>
    <scope>NUCLEOTIDE SEQUENCE [MRNA]</scope>
</reference>
<feature type="chain" id="PRO_0000069229" description="C-C chemokine receptor type 1">
    <location>
        <begin position="1"/>
        <end position="355"/>
    </location>
</feature>
<feature type="topological domain" description="Extracellular" evidence="3">
    <location>
        <begin position="1"/>
        <end position="34"/>
    </location>
</feature>
<feature type="transmembrane region" description="Helical; Name=1" evidence="3">
    <location>
        <begin position="35"/>
        <end position="60"/>
    </location>
</feature>
<feature type="topological domain" description="Cytoplasmic" evidence="3">
    <location>
        <begin position="61"/>
        <end position="64"/>
    </location>
</feature>
<feature type="transmembrane region" description="Helical; Name=2" evidence="3">
    <location>
        <begin position="65"/>
        <end position="91"/>
    </location>
</feature>
<feature type="topological domain" description="Extracellular" evidence="3">
    <location>
        <begin position="92"/>
        <end position="107"/>
    </location>
</feature>
<feature type="transmembrane region" description="Helical; Name=3" evidence="3">
    <location>
        <begin position="108"/>
        <end position="129"/>
    </location>
</feature>
<feature type="topological domain" description="Cytoplasmic" evidence="3">
    <location>
        <begin position="130"/>
        <end position="146"/>
    </location>
</feature>
<feature type="transmembrane region" description="Helical; Name=4" evidence="3">
    <location>
        <begin position="147"/>
        <end position="171"/>
    </location>
</feature>
<feature type="topological domain" description="Extracellular" evidence="3">
    <location>
        <begin position="172"/>
        <end position="197"/>
    </location>
</feature>
<feature type="transmembrane region" description="Helical; Name=5" evidence="3">
    <location>
        <begin position="198"/>
        <end position="223"/>
    </location>
</feature>
<feature type="topological domain" description="Cytoplasmic" evidence="3">
    <location>
        <begin position="224"/>
        <end position="239"/>
    </location>
</feature>
<feature type="transmembrane region" description="Helical; Name=6" evidence="3">
    <location>
        <begin position="240"/>
        <end position="264"/>
    </location>
</feature>
<feature type="topological domain" description="Extracellular" evidence="3">
    <location>
        <begin position="265"/>
        <end position="281"/>
    </location>
</feature>
<feature type="transmembrane region" description="Helical; Name=7" evidence="3">
    <location>
        <begin position="282"/>
        <end position="305"/>
    </location>
</feature>
<feature type="topological domain" description="Cytoplasmic" evidence="3">
    <location>
        <begin position="306"/>
        <end position="355"/>
    </location>
</feature>
<feature type="disulfide bond" evidence="4">
    <location>
        <begin position="106"/>
        <end position="183"/>
    </location>
</feature>
<proteinExistence type="evidence at transcript level"/>
<gene>
    <name type="primary">CCR1</name>
</gene>
<protein>
    <recommendedName>
        <fullName>C-C chemokine receptor type 1</fullName>
        <shortName>C-C CKR-1</shortName>
        <shortName>CC-CKR-1</shortName>
        <shortName>CCR-1</shortName>
        <shortName>CCR1</shortName>
    </recommendedName>
    <cdAntigenName>CD191</cdAntigenName>
</protein>
<accession>Q2Y2P0</accession>
<keyword id="KW-1003">Cell membrane</keyword>
<keyword id="KW-1015">Disulfide bond</keyword>
<keyword id="KW-0297">G-protein coupled receptor</keyword>
<keyword id="KW-0472">Membrane</keyword>
<keyword id="KW-0675">Receptor</keyword>
<keyword id="KW-1185">Reference proteome</keyword>
<keyword id="KW-0807">Transducer</keyword>
<keyword id="KW-0812">Transmembrane</keyword>
<keyword id="KW-1133">Transmembrane helix</keyword>
<comment type="function">
    <text evidence="1 2">Chemokine receptor that plays a crucial role in regulating immune cell migration, inflammation, and immune responses. Contributes to the inflammatory response by recruiting immune cells, such as monocytes, macrophages, T-cells, and dendritic cells, to sites of inflammation for the clearance of pathogens and the resolution of tissue damage. When activated by its ligands including CCL3, CCL5-9, CCL13-16 and CCL23, triggers a signaling cascade within immune cells, leading to their migration towards the source of the chemokine (By similarity). For example, mediates neutrophil migration after activation by CCL3 leading to the sequential release of TNF-alpha and leukotriene B4 (By similarity). Also mediates monocyte migration upon CXCL4 binding (By similarity). Activation by CCL5 results in neuroinflammation through the ERK1/2 signaling pathway (By similarity).</text>
</comment>
<comment type="subunit">
    <text evidence="1">Interacts with CREB3. Interacts with CCL3. Interacts with CCL15. Interacts with CCL23. Interacts with GNAI1. Interacts with PF4/CXCL4.</text>
</comment>
<comment type="subcellular location">
    <subcellularLocation>
        <location evidence="1">Cell membrane</location>
        <topology evidence="1">Multi-pass membrane protein</topology>
    </subcellularLocation>
</comment>
<comment type="similarity">
    <text evidence="4">Belongs to the G-protein coupled receptor 1 family.</text>
</comment>
<name>CCR1_MACFA</name>
<sequence length="355" mass="41165">METPDTTENYDMITEFDYGDATPCHKVNERAILAQLLPPLYSLVFVIGVVGNLLVVLVLVQYKRLKNMTNIYLLNLAISDLLFLFTLPFLIYYKSTDDWIFGDAMCKILSGFYYTGLYSEIFFIILLTIDRYLAIVHAVFALRARTVTFGVITSIIIWALAILASSPLMYFSKTQWNIVRHSCNLHFPYESFQQWKLFQALKLNLFGLVLPLLVMIVCYTGIIKILLRRPNEKKSKAVRLIFVIMIIFFLFWTPYNLTELISVFQEFLFTHLCEQNRQLDLAMEVTEVIANMHCCVNPVIYAFAGERFRKYLRQLFHRRVAVHLVKWLPFLSGDRLERVSSTSPSTGEHELSAGL</sequence>